<gene>
    <name evidence="1" type="primary">tsf</name>
    <name type="ordered locus">BRE_124</name>
</gene>
<feature type="chain" id="PRO_1000116699" description="Elongation factor Ts">
    <location>
        <begin position="1"/>
        <end position="278"/>
    </location>
</feature>
<feature type="region of interest" description="Involved in Mg(2+) ion dislocation from EF-Tu" evidence="1">
    <location>
        <begin position="79"/>
        <end position="82"/>
    </location>
</feature>
<organism>
    <name type="scientific">Borrelia recurrentis (strain A1)</name>
    <dbReference type="NCBI Taxonomy" id="412418"/>
    <lineage>
        <taxon>Bacteria</taxon>
        <taxon>Pseudomonadati</taxon>
        <taxon>Spirochaetota</taxon>
        <taxon>Spirochaetia</taxon>
        <taxon>Spirochaetales</taxon>
        <taxon>Borreliaceae</taxon>
        <taxon>Borrelia</taxon>
    </lineage>
</organism>
<comment type="function">
    <text evidence="1">Associates with the EF-Tu.GDP complex and induces the exchange of GDP to GTP. It remains bound to the aminoacyl-tRNA.EF-Tu.GTP complex up to the GTP hydrolysis stage on the ribosome.</text>
</comment>
<comment type="subcellular location">
    <subcellularLocation>
        <location evidence="1">Cytoplasm</location>
    </subcellularLocation>
</comment>
<comment type="similarity">
    <text evidence="1">Belongs to the EF-Ts family.</text>
</comment>
<name>EFTS_BORRA</name>
<sequence length="278" mass="30972">MSISPQEVKKLRDATGAGFGDCKKALSVAGGDFELAKKKLKEMGIVSADKRSGRDAKEGRVFSYVNTERVGLLLIACETDFVAMNSDFVAFGNSLIKQLVESGRDILDEHQELEIKNLAATIKENIYVSKVYISNIASNELVKNYLHGDHSKIGVFVKFKIDDALKMQDEKLNNFAMDLALHVAAFSPLYLSVNDICLNYIKEQEEIFMRQMESSGKPENVVKGIISGKLKKHLGEIALLEQGFVKDDKLTVKEKIEEVSKLILSKIEVVEFKYLSVG</sequence>
<protein>
    <recommendedName>
        <fullName evidence="1">Elongation factor Ts</fullName>
        <shortName evidence="1">EF-Ts</shortName>
    </recommendedName>
</protein>
<accession>B5RQU7</accession>
<keyword id="KW-0963">Cytoplasm</keyword>
<keyword id="KW-0251">Elongation factor</keyword>
<keyword id="KW-0648">Protein biosynthesis</keyword>
<reference key="1">
    <citation type="journal article" date="2008" name="PLoS Genet.">
        <title>The genome of Borrelia recurrentis, the agent of deadly louse-borne relapsing fever, is a degraded subset of tick-borne Borrelia duttonii.</title>
        <authorList>
            <person name="Lescot M."/>
            <person name="Audic S."/>
            <person name="Robert C."/>
            <person name="Nguyen T.T."/>
            <person name="Blanc G."/>
            <person name="Cutler S.J."/>
            <person name="Wincker P."/>
            <person name="Couloux A."/>
            <person name="Claverie J.-M."/>
            <person name="Raoult D."/>
            <person name="Drancourt M."/>
        </authorList>
    </citation>
    <scope>NUCLEOTIDE SEQUENCE [LARGE SCALE GENOMIC DNA]</scope>
    <source>
        <strain>A1</strain>
    </source>
</reference>
<evidence type="ECO:0000255" key="1">
    <source>
        <dbReference type="HAMAP-Rule" id="MF_00050"/>
    </source>
</evidence>
<dbReference type="EMBL" id="CP000993">
    <property type="protein sequence ID" value="ACH94381.1"/>
    <property type="molecule type" value="Genomic_DNA"/>
</dbReference>
<dbReference type="RefSeq" id="WP_012538675.1">
    <property type="nucleotide sequence ID" value="NC_011244.1"/>
</dbReference>
<dbReference type="SMR" id="B5RQU7"/>
<dbReference type="KEGG" id="bre:BRE_124"/>
<dbReference type="HOGENOM" id="CLU_047155_0_0_12"/>
<dbReference type="Proteomes" id="UP000000612">
    <property type="component" value="Chromosome"/>
</dbReference>
<dbReference type="GO" id="GO:0005737">
    <property type="term" value="C:cytoplasm"/>
    <property type="evidence" value="ECO:0007669"/>
    <property type="project" value="UniProtKB-SubCell"/>
</dbReference>
<dbReference type="GO" id="GO:0003746">
    <property type="term" value="F:translation elongation factor activity"/>
    <property type="evidence" value="ECO:0007669"/>
    <property type="project" value="UniProtKB-UniRule"/>
</dbReference>
<dbReference type="CDD" id="cd14275">
    <property type="entry name" value="UBA_EF-Ts"/>
    <property type="match status" value="1"/>
</dbReference>
<dbReference type="FunFam" id="1.10.8.10:FF:000001">
    <property type="entry name" value="Elongation factor Ts"/>
    <property type="match status" value="1"/>
</dbReference>
<dbReference type="Gene3D" id="1.10.286.20">
    <property type="match status" value="1"/>
</dbReference>
<dbReference type="Gene3D" id="1.10.8.10">
    <property type="entry name" value="DNA helicase RuvA subunit, C-terminal domain"/>
    <property type="match status" value="1"/>
</dbReference>
<dbReference type="Gene3D" id="3.30.479.20">
    <property type="entry name" value="Elongation factor Ts, dimerisation domain"/>
    <property type="match status" value="2"/>
</dbReference>
<dbReference type="HAMAP" id="MF_00050">
    <property type="entry name" value="EF_Ts"/>
    <property type="match status" value="1"/>
</dbReference>
<dbReference type="InterPro" id="IPR036402">
    <property type="entry name" value="EF-Ts_dimer_sf"/>
</dbReference>
<dbReference type="InterPro" id="IPR001816">
    <property type="entry name" value="Transl_elong_EFTs/EF1B"/>
</dbReference>
<dbReference type="InterPro" id="IPR014039">
    <property type="entry name" value="Transl_elong_EFTs/EF1B_dimer"/>
</dbReference>
<dbReference type="InterPro" id="IPR018101">
    <property type="entry name" value="Transl_elong_Ts_CS"/>
</dbReference>
<dbReference type="InterPro" id="IPR009060">
    <property type="entry name" value="UBA-like_sf"/>
</dbReference>
<dbReference type="NCBIfam" id="TIGR00116">
    <property type="entry name" value="tsf"/>
    <property type="match status" value="1"/>
</dbReference>
<dbReference type="PANTHER" id="PTHR11741">
    <property type="entry name" value="ELONGATION FACTOR TS"/>
    <property type="match status" value="1"/>
</dbReference>
<dbReference type="PANTHER" id="PTHR11741:SF0">
    <property type="entry name" value="ELONGATION FACTOR TS, MITOCHONDRIAL"/>
    <property type="match status" value="1"/>
</dbReference>
<dbReference type="Pfam" id="PF00889">
    <property type="entry name" value="EF_TS"/>
    <property type="match status" value="1"/>
</dbReference>
<dbReference type="SUPFAM" id="SSF54713">
    <property type="entry name" value="Elongation factor Ts (EF-Ts), dimerisation domain"/>
    <property type="match status" value="1"/>
</dbReference>
<dbReference type="SUPFAM" id="SSF46934">
    <property type="entry name" value="UBA-like"/>
    <property type="match status" value="1"/>
</dbReference>
<dbReference type="PROSITE" id="PS01126">
    <property type="entry name" value="EF_TS_1"/>
    <property type="match status" value="1"/>
</dbReference>
<proteinExistence type="inferred from homology"/>